<gene>
    <name type="primary">PANK2</name>
    <name type="ordered locus">At4g32180</name>
    <name type="ORF">F10M6.180</name>
    <name type="ORF">F10N7.10</name>
</gene>
<proteinExistence type="evidence at protein level"/>
<dbReference type="EC" id="2.7.1.33" evidence="3"/>
<dbReference type="EC" id="3.1.3.-" evidence="4"/>
<dbReference type="EMBL" id="AL021636">
    <property type="protein sequence ID" value="CAA16571.1"/>
    <property type="status" value="ALT_SEQ"/>
    <property type="molecule type" value="Genomic_DNA"/>
</dbReference>
<dbReference type="EMBL" id="AL021811">
    <property type="protein sequence ID" value="CAA16972.1"/>
    <property type="status" value="ALT_SEQ"/>
    <property type="molecule type" value="Genomic_DNA"/>
</dbReference>
<dbReference type="EMBL" id="AL161580">
    <property type="protein sequence ID" value="CAB79936.1"/>
    <property type="status" value="ALT_SEQ"/>
    <property type="molecule type" value="Genomic_DNA"/>
</dbReference>
<dbReference type="EMBL" id="CP002687">
    <property type="protein sequence ID" value="AEE86015.1"/>
    <property type="molecule type" value="Genomic_DNA"/>
</dbReference>
<dbReference type="EMBL" id="AY099839">
    <property type="protein sequence ID" value="AAM20690.1"/>
    <property type="molecule type" value="mRNA"/>
</dbReference>
<dbReference type="RefSeq" id="NP_194945.3">
    <molecule id="Q8L5Y9-1"/>
    <property type="nucleotide sequence ID" value="NM_119370.5"/>
</dbReference>
<dbReference type="SMR" id="Q8L5Y9"/>
<dbReference type="BioGRID" id="14637">
    <property type="interactions" value="3"/>
</dbReference>
<dbReference type="FunCoup" id="Q8L5Y9">
    <property type="interactions" value="2821"/>
</dbReference>
<dbReference type="IntAct" id="Q8L5Y9">
    <property type="interactions" value="5"/>
</dbReference>
<dbReference type="STRING" id="3702.Q8L5Y9"/>
<dbReference type="iPTMnet" id="Q8L5Y9"/>
<dbReference type="PaxDb" id="3702-AT4G32180.1"/>
<dbReference type="ProteomicsDB" id="226054">
    <molecule id="Q8L5Y9-1"/>
</dbReference>
<dbReference type="EnsemblPlants" id="AT4G32180.1">
    <molecule id="Q8L5Y9-1"/>
    <property type="protein sequence ID" value="AT4G32180.1"/>
    <property type="gene ID" value="AT4G32180"/>
</dbReference>
<dbReference type="GeneID" id="829351"/>
<dbReference type="Gramene" id="AT4G32180.1">
    <molecule id="Q8L5Y9-1"/>
    <property type="protein sequence ID" value="AT4G32180.1"/>
    <property type="gene ID" value="AT4G32180"/>
</dbReference>
<dbReference type="KEGG" id="ath:AT4G32180"/>
<dbReference type="Araport" id="AT4G32180"/>
<dbReference type="TAIR" id="AT4G32180">
    <property type="gene designation" value="PANK2"/>
</dbReference>
<dbReference type="eggNOG" id="KOG2201">
    <property type="taxonomic scope" value="Eukaryota"/>
</dbReference>
<dbReference type="eggNOG" id="KOG4584">
    <property type="taxonomic scope" value="Eukaryota"/>
</dbReference>
<dbReference type="InParanoid" id="Q8L5Y9"/>
<dbReference type="OrthoDB" id="498611at2759"/>
<dbReference type="BioCyc" id="ARA:AT4G32180-MONOMER"/>
<dbReference type="BioCyc" id="MetaCyc:AT4G32180-MONOMER"/>
<dbReference type="SABIO-RK" id="Q8L5Y9"/>
<dbReference type="UniPathway" id="UPA00241">
    <property type="reaction ID" value="UER00352"/>
</dbReference>
<dbReference type="PRO" id="PR:Q8L5Y9"/>
<dbReference type="Proteomes" id="UP000006548">
    <property type="component" value="Chromosome 4"/>
</dbReference>
<dbReference type="ExpressionAtlas" id="Q8L5Y9">
    <property type="expression patterns" value="baseline and differential"/>
</dbReference>
<dbReference type="GO" id="GO:0005524">
    <property type="term" value="F:ATP binding"/>
    <property type="evidence" value="ECO:0007669"/>
    <property type="project" value="UniProtKB-KW"/>
</dbReference>
<dbReference type="GO" id="GO:0016787">
    <property type="term" value="F:hydrolase activity"/>
    <property type="evidence" value="ECO:0007669"/>
    <property type="project" value="UniProtKB-KW"/>
</dbReference>
<dbReference type="GO" id="GO:0046872">
    <property type="term" value="F:metal ion binding"/>
    <property type="evidence" value="ECO:0007669"/>
    <property type="project" value="UniProtKB-KW"/>
</dbReference>
<dbReference type="GO" id="GO:0004594">
    <property type="term" value="F:pantothenate kinase activity"/>
    <property type="evidence" value="ECO:0000316"/>
    <property type="project" value="TAIR"/>
</dbReference>
<dbReference type="GO" id="GO:0015937">
    <property type="term" value="P:coenzyme A biosynthetic process"/>
    <property type="evidence" value="ECO:0007669"/>
    <property type="project" value="UniProtKB-UniPathway"/>
</dbReference>
<dbReference type="CDD" id="cd24123">
    <property type="entry name" value="ASKHA_NBD_PanK-II_Pank4"/>
    <property type="match status" value="1"/>
</dbReference>
<dbReference type="FunFam" id="1.20.1700.10:FF:000002">
    <property type="entry name" value="Pantothenate kinase 2"/>
    <property type="match status" value="1"/>
</dbReference>
<dbReference type="FunFam" id="3.30.420.40:FF:000273">
    <property type="entry name" value="Pantothenate kinase 2"/>
    <property type="match status" value="1"/>
</dbReference>
<dbReference type="FunFam" id="3.30.420.510:FF:000003">
    <property type="entry name" value="Pantothenate kinase 2"/>
    <property type="match status" value="1"/>
</dbReference>
<dbReference type="Gene3D" id="3.30.420.40">
    <property type="match status" value="1"/>
</dbReference>
<dbReference type="Gene3D" id="3.30.420.510">
    <property type="match status" value="1"/>
</dbReference>
<dbReference type="Gene3D" id="1.20.1700.10">
    <property type="entry name" value="AF1104-like"/>
    <property type="match status" value="1"/>
</dbReference>
<dbReference type="Gene3D" id="1.10.285.20">
    <property type="entry name" value="Uncharacterised protein PF01937, DUF89, domain 2"/>
    <property type="match status" value="1"/>
</dbReference>
<dbReference type="Gene3D" id="3.40.50.10880">
    <property type="entry name" value="Uncharacterised protein PF01937, DUF89, domain 3"/>
    <property type="match status" value="1"/>
</dbReference>
<dbReference type="InterPro" id="IPR036075">
    <property type="entry name" value="ARMT-1-like_metal-bd_sf"/>
</dbReference>
<dbReference type="InterPro" id="IPR002791">
    <property type="entry name" value="ARMT1-like_metal-bd"/>
</dbReference>
<dbReference type="InterPro" id="IPR035073">
    <property type="entry name" value="At2g17340_3_helix_bundle"/>
</dbReference>
<dbReference type="InterPro" id="IPR043129">
    <property type="entry name" value="ATPase_NBD"/>
</dbReference>
<dbReference type="InterPro" id="IPR015844">
    <property type="entry name" value="PanK_long"/>
</dbReference>
<dbReference type="InterPro" id="IPR004567">
    <property type="entry name" value="Type_II_PanK"/>
</dbReference>
<dbReference type="NCBIfam" id="TIGR00555">
    <property type="entry name" value="panK_eukar"/>
    <property type="match status" value="1"/>
</dbReference>
<dbReference type="PANTHER" id="PTHR12280">
    <property type="entry name" value="PANTOTHENATE KINASE"/>
    <property type="match status" value="1"/>
</dbReference>
<dbReference type="PANTHER" id="PTHR12280:SF34">
    <property type="entry name" value="PANTOTHENATE KINASE 1"/>
    <property type="match status" value="1"/>
</dbReference>
<dbReference type="Pfam" id="PF01937">
    <property type="entry name" value="ARMT1-like_dom"/>
    <property type="match status" value="1"/>
</dbReference>
<dbReference type="Pfam" id="PF03630">
    <property type="entry name" value="Fumble"/>
    <property type="match status" value="1"/>
</dbReference>
<dbReference type="PIRSF" id="PIRSF036939">
    <property type="entry name" value="PanK_long"/>
    <property type="match status" value="1"/>
</dbReference>
<dbReference type="SUPFAM" id="SSF53067">
    <property type="entry name" value="Actin-like ATPase domain"/>
    <property type="match status" value="2"/>
</dbReference>
<dbReference type="SUPFAM" id="SSF111321">
    <property type="entry name" value="AF1104-like"/>
    <property type="match status" value="1"/>
</dbReference>
<sequence>MAGQEDEYDPILDNKREAEAKSQVSVAADKNMAPSTSGTPIHRSGSRPQLDLSKAEIQGNLEERDPTILLPNQSDDISHLALDIGGSLIKLLYFSRHEDYSNDDDKRKRTIKERLGITNGNLRSYPVLGGRLHFVKFETHKINECLDFIHSKQLHRRDPYPWSSKTLPLGTGVIKVTGGGAFKFADLFKERLGVSIEKEDEMHCLVSGANFLLKAIRHEAFTHMEGEKEFVQIDPNDLYPYLLVNVGSGVSIIKVDGEGKFERVSGTNVGGGTYWGLGRLLTKCKSFDELLELSQKGDNSAIDMLVGDIYGGMDYSKIGLSASTIASSFGKAISENKELDDYRPEDISLSLLRMISYNIGQISYLNALRFGLKRIFFGGFFIRGHAYTMDTISFAVHFWSKGEMQAMFLRHEGFLGALGAFMSYEKHGLDDLMSHQLVERFPMGAPYTGGNIHGPPLGDLDEKISWMEKFVRRGTEITAPVPMTPSKTTGLGGFEVPSSRGSALRSDASALNVGVLHLVPTLEVFPLLADPKTYEPNTIDLSDQGEREYWLKVLSEHLPDLVDTAVASEGGTEDAKRRGDAFARAFSAHLARLMEEPAAYGKLGLANLLELREECLREFQFVDAYRSIKQRENEASLAVLPDLLEELDSMSEEARLLTLIEGVLAANIFDWGSRACVDLYHKGTIIEIYRMSRNKMQRPWRVDDFDAFKERMLGSGGKQPHRHKRALLFVDNSGADVILGMLPLAREFLRRGTEVVLVANSLPALNDVTAMELPDIVAGAAKHCDILRRAAEMGGLLVDAMVNPGDGSKKDSTSAPLMVVENGCGSPCIDLRQVSSELAAAAKDADLVVLEGMGRALHTNFNAQFQCEALKLAMVKNQRLAEKLIKGNIYDCVCRYEPPSL</sequence>
<keyword id="KW-0025">Alternative splicing</keyword>
<keyword id="KW-0067">ATP-binding</keyword>
<keyword id="KW-0173">Coenzyme A biosynthesis</keyword>
<keyword id="KW-0378">Hydrolase</keyword>
<keyword id="KW-0418">Kinase</keyword>
<keyword id="KW-0464">Manganese</keyword>
<keyword id="KW-0479">Metal-binding</keyword>
<keyword id="KW-0533">Nickel</keyword>
<keyword id="KW-0547">Nucleotide-binding</keyword>
<keyword id="KW-1185">Reference proteome</keyword>
<keyword id="KW-0808">Transferase</keyword>
<comment type="function">
    <text evidence="3 4">Catalyzes the phosphorylation of pantothenate the first step in CoA biosynthesis. May play a role in the physiological regulation of the intracellular CoA concentration. Functionally redudant with PANK1 (PubMed:16897480). The phosphatase activity shows preference for normal or oxidatively damaged intermediates of 4'-phosphopantetheine, which provides strong indirect evidence that the phosphatase activity pre-empts damage in the CoA pathway (PubMed:27322068). Hydrolyzing excess 4'-phosphopantetheine could constitute a directed overflow mechanism to prevent its oxidation to the S-sulfonate, sulfonate, or other forms (PubMed:27322068). Hydrolyzing 4'-phosphopantetheine sulfonate or S-sulfonate would forestall their conversion to inactive forms of CoA and acyl carrier protein (PubMed:27322068).</text>
</comment>
<comment type="catalytic activity">
    <reaction evidence="3">
        <text>(R)-pantothenate + ATP = (R)-4'-phosphopantothenate + ADP + H(+)</text>
        <dbReference type="Rhea" id="RHEA:16373"/>
        <dbReference type="ChEBI" id="CHEBI:10986"/>
        <dbReference type="ChEBI" id="CHEBI:15378"/>
        <dbReference type="ChEBI" id="CHEBI:29032"/>
        <dbReference type="ChEBI" id="CHEBI:30616"/>
        <dbReference type="ChEBI" id="CHEBI:456216"/>
        <dbReference type="EC" id="2.7.1.33"/>
    </reaction>
    <physiologicalReaction direction="left-to-right" evidence="8">
        <dbReference type="Rhea" id="RHEA:16374"/>
    </physiologicalReaction>
</comment>
<comment type="catalytic activity">
    <reaction evidence="4">
        <text>(R)-4'-phosphopantothenate + H2O = (R)-pantothenate + phosphate</text>
        <dbReference type="Rhea" id="RHEA:68332"/>
        <dbReference type="ChEBI" id="CHEBI:10986"/>
        <dbReference type="ChEBI" id="CHEBI:15377"/>
        <dbReference type="ChEBI" id="CHEBI:29032"/>
        <dbReference type="ChEBI" id="CHEBI:43474"/>
    </reaction>
    <physiologicalReaction direction="left-to-right" evidence="9">
        <dbReference type="Rhea" id="RHEA:68333"/>
    </physiologicalReaction>
</comment>
<comment type="catalytic activity">
    <reaction evidence="4">
        <text>(R)-4'-phosphopantetheine + H2O = (R)-pantetheine + phosphate</text>
        <dbReference type="Rhea" id="RHEA:68328"/>
        <dbReference type="ChEBI" id="CHEBI:15377"/>
        <dbReference type="ChEBI" id="CHEBI:16753"/>
        <dbReference type="ChEBI" id="CHEBI:43474"/>
        <dbReference type="ChEBI" id="CHEBI:61723"/>
    </reaction>
    <physiologicalReaction direction="left-to-right" evidence="9">
        <dbReference type="Rhea" id="RHEA:68329"/>
    </physiologicalReaction>
</comment>
<comment type="catalytic activity">
    <reaction evidence="4">
        <text>(R)-4'-phosphopantetheine sulfonate + H2O = (R)-pantetheine sulfonate + phosphate</text>
        <dbReference type="Rhea" id="RHEA:68336"/>
        <dbReference type="ChEBI" id="CHEBI:15377"/>
        <dbReference type="ChEBI" id="CHEBI:43474"/>
        <dbReference type="ChEBI" id="CHEBI:177300"/>
        <dbReference type="ChEBI" id="CHEBI:177301"/>
    </reaction>
    <physiologicalReaction direction="left-to-right" evidence="9">
        <dbReference type="Rhea" id="RHEA:68337"/>
    </physiologicalReaction>
</comment>
<comment type="cofactor">
    <cofactor evidence="4">
        <name>Mn(2+)</name>
        <dbReference type="ChEBI" id="CHEBI:29035"/>
    </cofactor>
    <cofactor evidence="4">
        <name>Ni(2+)</name>
        <dbReference type="ChEBI" id="CHEBI:49786"/>
    </cofactor>
    <text evidence="4">Phosphatase activity is strongly promoted by several divalent cation ions but it is suggested s that Mn(2+) and possibly Ni(2+) represent biologically relevant metal ion cofactors for damage-control phosphatases.</text>
</comment>
<comment type="activity regulation">
    <text evidence="4">Activity is strongly promoted by Co(2+), Ni(2+) and Mn(2+) (PubMed:27322068). Activity is inhibited by EDTA (PubMed:27322068).</text>
</comment>
<comment type="biophysicochemical properties">
    <kinetics>
        <KM evidence="4">640 uM for p-nitrophenylphosphate</KM>
        <KM evidence="4">18.9 uM for phosphopantetheine</KM>
        <KM evidence="4">2.91 uM for 4'-phosphopantotheine-S-sulfonate</KM>
        <KM evidence="4">0.28 uM for 4'-phosphopantothenate</KM>
        <text evidence="4">kcat is 1.99 sec(-1) with p-nitrophenylphosphate as substrate. kcat is 0.26 sec(-1) with phosphopantetheine as substrate. kcat is 0.94 sec(-1) with 4'-phosphopantotheine-S-sulfonate as substrate. kcat is 0.52 sec(-1) with 4'-phosphopantothenate as substrate.</text>
    </kinetics>
</comment>
<comment type="pathway">
    <text evidence="3">Cofactor biosynthesis; coenzyme A biosynthesis; CoA from (R)-pantothenate: step 1/5.</text>
</comment>
<comment type="interaction">
    <interactant intactId="EBI-2356879">
        <id>Q8L5Y9</id>
    </interactant>
    <interactant intactId="EBI-2107143">
        <id>Q38997</id>
        <label>KIN10</label>
    </interactant>
    <organismsDiffer>false</organismsDiffer>
    <experiments>4</experiments>
</comment>
<comment type="alternative products">
    <event type="alternative splicing"/>
    <isoform>
        <id>Q8L5Y9-1</id>
        <name>1</name>
        <sequence type="displayed"/>
    </isoform>
    <text evidence="7">A number of isoforms are produced. According to EST sequences.</text>
</comment>
<comment type="tissue specificity">
    <text evidence="3">Highly expressed in leaves and developing seeds. Expressed in roots, stems and flowers.</text>
</comment>
<comment type="domain">
    <text evidence="9">Subfamily II proteins have an EGMGR motif about 50 residues from the C-terminus (Probable). This motif lies near the metal-binding residues in the putative substrate-binding cleft 2 (Probable). Subfamily II proteins occur only in eukaryotes, in two forms: as a stand-alone unit in plants, and as a C-terminal domain of pantothenate kinases in plants, animals, and chytrid fungi (Probable).</text>
</comment>
<comment type="disruption phenotype">
    <text evidence="3">No visible phenotype under normal growth conditions, but homozygous double mutants pank1-1 and pank2-1 are embryonic lethal.</text>
</comment>
<comment type="similarity">
    <text evidence="7">In the N-terminal section; belongs to the type II pantothenate kinase family.</text>
</comment>
<comment type="similarity">
    <text evidence="7">In the C-terminal section; belongs to the damage-control phosphatase family. Phosphopantetheine phosphatase II subfamily.</text>
</comment>
<comment type="sequence caution" evidence="7">
    <conflict type="erroneous gene model prediction">
        <sequence resource="EMBL-CDS" id="CAA16571"/>
    </conflict>
</comment>
<comment type="sequence caution" evidence="7">
    <conflict type="erroneous gene model prediction">
        <sequence resource="EMBL-CDS" id="CAA16972"/>
    </conflict>
</comment>
<comment type="sequence caution" evidence="7">
    <conflict type="erroneous gene model prediction">
        <sequence resource="EMBL-CDS" id="CAB79936"/>
    </conflict>
</comment>
<protein>
    <recommendedName>
        <fullName evidence="5">Pantothenate kinase 2</fullName>
        <shortName evidence="5">AtPANK2</shortName>
    </recommendedName>
    <alternativeName>
        <fullName evidence="5">Pantothenic acid kinase 2</fullName>
    </alternativeName>
    <domain>
        <recommendedName>
            <fullName evidence="5">Pantothenate kinase</fullName>
            <ecNumber evidence="3">2.7.1.33</ecNumber>
        </recommendedName>
    </domain>
    <domain>
        <recommendedName>
            <fullName evidence="6">4'-phosphopantetheine phosphatase</fullName>
            <ecNumber evidence="4">3.1.3.-</ecNumber>
        </recommendedName>
    </domain>
</protein>
<reference key="1">
    <citation type="journal article" date="1999" name="Nature">
        <title>Sequence and analysis of chromosome 4 of the plant Arabidopsis thaliana.</title>
        <authorList>
            <person name="Mayer K.F.X."/>
            <person name="Schueller C."/>
            <person name="Wambutt R."/>
            <person name="Murphy G."/>
            <person name="Volckaert G."/>
            <person name="Pohl T."/>
            <person name="Duesterhoeft A."/>
            <person name="Stiekema W."/>
            <person name="Entian K.-D."/>
            <person name="Terryn N."/>
            <person name="Harris B."/>
            <person name="Ansorge W."/>
            <person name="Brandt P."/>
            <person name="Grivell L.A."/>
            <person name="Rieger M."/>
            <person name="Weichselgartner M."/>
            <person name="de Simone V."/>
            <person name="Obermaier B."/>
            <person name="Mache R."/>
            <person name="Mueller M."/>
            <person name="Kreis M."/>
            <person name="Delseny M."/>
            <person name="Puigdomenech P."/>
            <person name="Watson M."/>
            <person name="Schmidtheini T."/>
            <person name="Reichert B."/>
            <person name="Portetelle D."/>
            <person name="Perez-Alonso M."/>
            <person name="Boutry M."/>
            <person name="Bancroft I."/>
            <person name="Vos P."/>
            <person name="Hoheisel J."/>
            <person name="Zimmermann W."/>
            <person name="Wedler H."/>
            <person name="Ridley P."/>
            <person name="Langham S.-A."/>
            <person name="McCullagh B."/>
            <person name="Bilham L."/>
            <person name="Robben J."/>
            <person name="van der Schueren J."/>
            <person name="Grymonprez B."/>
            <person name="Chuang Y.-J."/>
            <person name="Vandenbussche F."/>
            <person name="Braeken M."/>
            <person name="Weltjens I."/>
            <person name="Voet M."/>
            <person name="Bastiaens I."/>
            <person name="Aert R."/>
            <person name="Defoor E."/>
            <person name="Weitzenegger T."/>
            <person name="Bothe G."/>
            <person name="Ramsperger U."/>
            <person name="Hilbert H."/>
            <person name="Braun M."/>
            <person name="Holzer E."/>
            <person name="Brandt A."/>
            <person name="Peters S."/>
            <person name="van Staveren M."/>
            <person name="Dirkse W."/>
            <person name="Mooijman P."/>
            <person name="Klein Lankhorst R."/>
            <person name="Rose M."/>
            <person name="Hauf J."/>
            <person name="Koetter P."/>
            <person name="Berneiser S."/>
            <person name="Hempel S."/>
            <person name="Feldpausch M."/>
            <person name="Lamberth S."/>
            <person name="Van den Daele H."/>
            <person name="De Keyser A."/>
            <person name="Buysshaert C."/>
            <person name="Gielen J."/>
            <person name="Villarroel R."/>
            <person name="De Clercq R."/>
            <person name="van Montagu M."/>
            <person name="Rogers J."/>
            <person name="Cronin A."/>
            <person name="Quail M.A."/>
            <person name="Bray-Allen S."/>
            <person name="Clark L."/>
            <person name="Doggett J."/>
            <person name="Hall S."/>
            <person name="Kay M."/>
            <person name="Lennard N."/>
            <person name="McLay K."/>
            <person name="Mayes R."/>
            <person name="Pettett A."/>
            <person name="Rajandream M.A."/>
            <person name="Lyne M."/>
            <person name="Benes V."/>
            <person name="Rechmann S."/>
            <person name="Borkova D."/>
            <person name="Bloecker H."/>
            <person name="Scharfe M."/>
            <person name="Grimm M."/>
            <person name="Loehnert T.-H."/>
            <person name="Dose S."/>
            <person name="de Haan M."/>
            <person name="Maarse A.C."/>
            <person name="Schaefer M."/>
            <person name="Mueller-Auer S."/>
            <person name="Gabel C."/>
            <person name="Fuchs M."/>
            <person name="Fartmann B."/>
            <person name="Granderath K."/>
            <person name="Dauner D."/>
            <person name="Herzl A."/>
            <person name="Neumann S."/>
            <person name="Argiriou A."/>
            <person name="Vitale D."/>
            <person name="Liguori R."/>
            <person name="Piravandi E."/>
            <person name="Massenet O."/>
            <person name="Quigley F."/>
            <person name="Clabauld G."/>
            <person name="Muendlein A."/>
            <person name="Felber R."/>
            <person name="Schnabl S."/>
            <person name="Hiller R."/>
            <person name="Schmidt W."/>
            <person name="Lecharny A."/>
            <person name="Aubourg S."/>
            <person name="Chefdor F."/>
            <person name="Cooke R."/>
            <person name="Berger C."/>
            <person name="Monfort A."/>
            <person name="Casacuberta E."/>
            <person name="Gibbons T."/>
            <person name="Weber N."/>
            <person name="Vandenbol M."/>
            <person name="Bargues M."/>
            <person name="Terol J."/>
            <person name="Torres A."/>
            <person name="Perez-Perez A."/>
            <person name="Purnelle B."/>
            <person name="Bent E."/>
            <person name="Johnson S."/>
            <person name="Tacon D."/>
            <person name="Jesse T."/>
            <person name="Heijnen L."/>
            <person name="Schwarz S."/>
            <person name="Scholler P."/>
            <person name="Heber S."/>
            <person name="Francs P."/>
            <person name="Bielke C."/>
            <person name="Frishman D."/>
            <person name="Haase D."/>
            <person name="Lemcke K."/>
            <person name="Mewes H.-W."/>
            <person name="Stocker S."/>
            <person name="Zaccaria P."/>
            <person name="Bevan M."/>
            <person name="Wilson R.K."/>
            <person name="de la Bastide M."/>
            <person name="Habermann K."/>
            <person name="Parnell L."/>
            <person name="Dedhia N."/>
            <person name="Gnoj L."/>
            <person name="Schutz K."/>
            <person name="Huang E."/>
            <person name="Spiegel L."/>
            <person name="Sekhon M."/>
            <person name="Murray J."/>
            <person name="Sheet P."/>
            <person name="Cordes M."/>
            <person name="Abu-Threideh J."/>
            <person name="Stoneking T."/>
            <person name="Kalicki J."/>
            <person name="Graves T."/>
            <person name="Harmon G."/>
            <person name="Edwards J."/>
            <person name="Latreille P."/>
            <person name="Courtney L."/>
            <person name="Cloud J."/>
            <person name="Abbott A."/>
            <person name="Scott K."/>
            <person name="Johnson D."/>
            <person name="Minx P."/>
            <person name="Bentley D."/>
            <person name="Fulton B."/>
            <person name="Miller N."/>
            <person name="Greco T."/>
            <person name="Kemp K."/>
            <person name="Kramer J."/>
            <person name="Fulton L."/>
            <person name="Mardis E."/>
            <person name="Dante M."/>
            <person name="Pepin K."/>
            <person name="Hillier L.W."/>
            <person name="Nelson J."/>
            <person name="Spieth J."/>
            <person name="Ryan E."/>
            <person name="Andrews S."/>
            <person name="Geisel C."/>
            <person name="Layman D."/>
            <person name="Du H."/>
            <person name="Ali J."/>
            <person name="Berghoff A."/>
            <person name="Jones K."/>
            <person name="Drone K."/>
            <person name="Cotton M."/>
            <person name="Joshu C."/>
            <person name="Antonoiu B."/>
            <person name="Zidanic M."/>
            <person name="Strong C."/>
            <person name="Sun H."/>
            <person name="Lamar B."/>
            <person name="Yordan C."/>
            <person name="Ma P."/>
            <person name="Zhong J."/>
            <person name="Preston R."/>
            <person name="Vil D."/>
            <person name="Shekher M."/>
            <person name="Matero A."/>
            <person name="Shah R."/>
            <person name="Swaby I.K."/>
            <person name="O'Shaughnessy A."/>
            <person name="Rodriguez M."/>
            <person name="Hoffman J."/>
            <person name="Till S."/>
            <person name="Granat S."/>
            <person name="Shohdy N."/>
            <person name="Hasegawa A."/>
            <person name="Hameed A."/>
            <person name="Lodhi M."/>
            <person name="Johnson A."/>
            <person name="Chen E."/>
            <person name="Marra M.A."/>
            <person name="Martienssen R."/>
            <person name="McCombie W.R."/>
        </authorList>
    </citation>
    <scope>NUCLEOTIDE SEQUENCE [LARGE SCALE GENOMIC DNA]</scope>
    <source>
        <strain>cv. Columbia</strain>
    </source>
</reference>
<reference key="2">
    <citation type="journal article" date="2017" name="Plant J.">
        <title>Araport11: a complete reannotation of the Arabidopsis thaliana reference genome.</title>
        <authorList>
            <person name="Cheng C.Y."/>
            <person name="Krishnakumar V."/>
            <person name="Chan A.P."/>
            <person name="Thibaud-Nissen F."/>
            <person name="Schobel S."/>
            <person name="Town C.D."/>
        </authorList>
    </citation>
    <scope>GENOME REANNOTATION</scope>
    <source>
        <strain>cv. Columbia</strain>
    </source>
</reference>
<reference key="3">
    <citation type="journal article" date="2003" name="Science">
        <title>Empirical analysis of transcriptional activity in the Arabidopsis genome.</title>
        <authorList>
            <person name="Yamada K."/>
            <person name="Lim J."/>
            <person name="Dale J.M."/>
            <person name="Chen H."/>
            <person name="Shinn P."/>
            <person name="Palm C.J."/>
            <person name="Southwick A.M."/>
            <person name="Wu H.C."/>
            <person name="Kim C.J."/>
            <person name="Nguyen M."/>
            <person name="Pham P.K."/>
            <person name="Cheuk R.F."/>
            <person name="Karlin-Newmann G."/>
            <person name="Liu S.X."/>
            <person name="Lam B."/>
            <person name="Sakano H."/>
            <person name="Wu T."/>
            <person name="Yu G."/>
            <person name="Miranda M."/>
            <person name="Quach H.L."/>
            <person name="Tripp M."/>
            <person name="Chang C.H."/>
            <person name="Lee J.M."/>
            <person name="Toriumi M.J."/>
            <person name="Chan M.M."/>
            <person name="Tang C.C."/>
            <person name="Onodera C.S."/>
            <person name="Deng J.M."/>
            <person name="Akiyama K."/>
            <person name="Ansari Y."/>
            <person name="Arakawa T."/>
            <person name="Banh J."/>
            <person name="Banno F."/>
            <person name="Bowser L."/>
            <person name="Brooks S.Y."/>
            <person name="Carninci P."/>
            <person name="Chao Q."/>
            <person name="Choy N."/>
            <person name="Enju A."/>
            <person name="Goldsmith A.D."/>
            <person name="Gurjal M."/>
            <person name="Hansen N.F."/>
            <person name="Hayashizaki Y."/>
            <person name="Johnson-Hopson C."/>
            <person name="Hsuan V.W."/>
            <person name="Iida K."/>
            <person name="Karnes M."/>
            <person name="Khan S."/>
            <person name="Koesema E."/>
            <person name="Ishida J."/>
            <person name="Jiang P.X."/>
            <person name="Jones T."/>
            <person name="Kawai J."/>
            <person name="Kamiya A."/>
            <person name="Meyers C."/>
            <person name="Nakajima M."/>
            <person name="Narusaka M."/>
            <person name="Seki M."/>
            <person name="Sakurai T."/>
            <person name="Satou M."/>
            <person name="Tamse R."/>
            <person name="Vaysberg M."/>
            <person name="Wallender E.K."/>
            <person name="Wong C."/>
            <person name="Yamamura Y."/>
            <person name="Yuan S."/>
            <person name="Shinozaki K."/>
            <person name="Davis R.W."/>
            <person name="Theologis A."/>
            <person name="Ecker J.R."/>
        </authorList>
    </citation>
    <scope>NUCLEOTIDE SEQUENCE [LARGE SCALE MRNA] OF 26-901</scope>
    <source>
        <strain>cv. Columbia</strain>
    </source>
</reference>
<reference key="4">
    <citation type="journal article" date="2006" name="Plant Mol. Biol.">
        <title>Plant coenzyme A biosynthesis: characterization of two pantothenate kinases from Arabidopsis.</title>
        <authorList>
            <person name="Tilton G.B."/>
            <person name="Wedemeyer W.J."/>
            <person name="Browse J."/>
            <person name="Ohlrogge J."/>
        </authorList>
    </citation>
    <scope>FUNCTION</scope>
    <scope>CATALYTIC ACTIVITY</scope>
    <scope>TISSUE SPECIFICITY</scope>
    <scope>DISRUPTION PHENOTYPE</scope>
</reference>
<reference key="5">
    <citation type="journal article" date="2009" name="Plant Physiol.">
        <title>Large-scale Arabidopsis phosphoproteome profiling reveals novel chloroplast kinase substrates and phosphorylation networks.</title>
        <authorList>
            <person name="Reiland S."/>
            <person name="Messerli G."/>
            <person name="Baerenfaller K."/>
            <person name="Gerrits B."/>
            <person name="Endler A."/>
            <person name="Grossmann J."/>
            <person name="Gruissem W."/>
            <person name="Baginsky S."/>
        </authorList>
    </citation>
    <scope>IDENTIFICATION BY MASS SPECTROMETRY [LARGE SCALE ANALYSIS]</scope>
</reference>
<reference key="6">
    <citation type="journal article" date="2016" name="Nat. Chem. Biol.">
        <title>A family of metal-dependent phosphatases implicated in metabolite damage-control.</title>
        <authorList>
            <person name="Huang L."/>
            <person name="Khusnutdinova A."/>
            <person name="Nocek B."/>
            <person name="Brown G."/>
            <person name="Xu X."/>
            <person name="Cui H."/>
            <person name="Petit P."/>
            <person name="Flick R."/>
            <person name="Zallot R."/>
            <person name="Balmant K."/>
            <person name="Ziemak M.J."/>
            <person name="Shanklin J."/>
            <person name="de Crecy-Lagard V."/>
            <person name="Fiehn O."/>
            <person name="Gregory J.F. III"/>
            <person name="Joachimiak A."/>
            <person name="Savchenko A."/>
            <person name="Yakunin A.F."/>
            <person name="Hanson A.D."/>
        </authorList>
    </citation>
    <scope>FUNCTION</scope>
    <scope>CATALYTIC ACTIVITY</scope>
    <scope>BIOPHYSICOCHEMICAL PROPERTIES</scope>
    <scope>ACTIVITY REGULATION</scope>
    <scope>COFACTOR</scope>
</reference>
<accession>Q8L5Y9</accession>
<accession>O49372</accession>
<accession>O49374</accession>
<name>PANK2_ARATH</name>
<feature type="chain" id="PRO_0000161809" description="Pantothenate kinase 2">
    <location>
        <begin position="1"/>
        <end position="901"/>
    </location>
</feature>
<feature type="region of interest" description="Pantothenate kinase" evidence="9">
    <location>
        <begin position="1"/>
        <end position="466"/>
    </location>
</feature>
<feature type="region of interest" description="Disordered" evidence="2">
    <location>
        <begin position="1"/>
        <end position="50"/>
    </location>
</feature>
<feature type="region of interest" description="4'-phosphopantetheine phosphatase" evidence="9">
    <location>
        <begin position="467"/>
        <end position="901"/>
    </location>
</feature>
<feature type="short sequence motif" description="Subfamily II EGMGR motif" evidence="9">
    <location>
        <begin position="851"/>
        <end position="855"/>
    </location>
</feature>
<feature type="compositionally biased region" description="Acidic residues" evidence="2">
    <location>
        <begin position="1"/>
        <end position="10"/>
    </location>
</feature>
<feature type="binding site" evidence="1">
    <location>
        <position position="731"/>
    </location>
    <ligand>
        <name>Mn(2+)</name>
        <dbReference type="ChEBI" id="CHEBI:29035"/>
        <note>catalytic; for phosphatase activity</note>
    </ligand>
</feature>
<feature type="binding site" evidence="1">
    <location>
        <position position="732"/>
    </location>
    <ligand>
        <name>Mn(2+)</name>
        <dbReference type="ChEBI" id="CHEBI:29035"/>
        <note>catalytic; for phosphatase activity</note>
    </ligand>
</feature>
<feature type="binding site" evidence="1">
    <location>
        <position position="767"/>
    </location>
    <ligand>
        <name>Mn(2+)</name>
        <dbReference type="ChEBI" id="CHEBI:29035"/>
        <note>catalytic; for phosphatase activity</note>
    </ligand>
</feature>
<organism>
    <name type="scientific">Arabidopsis thaliana</name>
    <name type="common">Mouse-ear cress</name>
    <dbReference type="NCBI Taxonomy" id="3702"/>
    <lineage>
        <taxon>Eukaryota</taxon>
        <taxon>Viridiplantae</taxon>
        <taxon>Streptophyta</taxon>
        <taxon>Embryophyta</taxon>
        <taxon>Tracheophyta</taxon>
        <taxon>Spermatophyta</taxon>
        <taxon>Magnoliopsida</taxon>
        <taxon>eudicotyledons</taxon>
        <taxon>Gunneridae</taxon>
        <taxon>Pentapetalae</taxon>
        <taxon>rosids</taxon>
        <taxon>malvids</taxon>
        <taxon>Brassicales</taxon>
        <taxon>Brassicaceae</taxon>
        <taxon>Camelineae</taxon>
        <taxon>Arabidopsis</taxon>
    </lineage>
</organism>
<evidence type="ECO:0000250" key="1">
    <source>
        <dbReference type="UniProtKB" id="Q04371"/>
    </source>
</evidence>
<evidence type="ECO:0000256" key="2">
    <source>
        <dbReference type="SAM" id="MobiDB-lite"/>
    </source>
</evidence>
<evidence type="ECO:0000269" key="3">
    <source>
    </source>
</evidence>
<evidence type="ECO:0000269" key="4">
    <source>
    </source>
</evidence>
<evidence type="ECO:0000303" key="5">
    <source>
    </source>
</evidence>
<evidence type="ECO:0000303" key="6">
    <source>
    </source>
</evidence>
<evidence type="ECO:0000305" key="7"/>
<evidence type="ECO:0000305" key="8">
    <source>
    </source>
</evidence>
<evidence type="ECO:0000305" key="9">
    <source>
    </source>
</evidence>